<evidence type="ECO:0000255" key="1"/>
<evidence type="ECO:0000256" key="2">
    <source>
        <dbReference type="SAM" id="MobiDB-lite"/>
    </source>
</evidence>
<evidence type="ECO:0000305" key="3"/>
<protein>
    <recommendedName>
        <fullName>Type IV secretion system protein PtlI homolog</fullName>
    </recommendedName>
</protein>
<keyword id="KW-0732">Signal</keyword>
<accession>Q7WDT9</accession>
<dbReference type="EMBL" id="BX640451">
    <property type="protein sequence ID" value="CAE35262.1"/>
    <property type="molecule type" value="Genomic_DNA"/>
</dbReference>
<dbReference type="RefSeq" id="WP_003815861.1">
    <property type="nucleotide sequence ID" value="NC_002927.3"/>
</dbReference>
<dbReference type="GeneID" id="56476602"/>
<dbReference type="KEGG" id="bbr:BB4898A"/>
<dbReference type="HOGENOM" id="CLU_2913301_0_0_4"/>
<dbReference type="Proteomes" id="UP000001027">
    <property type="component" value="Chromosome"/>
</dbReference>
<proteinExistence type="inferred from homology"/>
<reference key="1">
    <citation type="journal article" date="2003" name="Nat. Genet.">
        <title>Comparative analysis of the genome sequences of Bordetella pertussis, Bordetella parapertussis and Bordetella bronchiseptica.</title>
        <authorList>
            <person name="Parkhill J."/>
            <person name="Sebaihia M."/>
            <person name="Preston A."/>
            <person name="Murphy L.D."/>
            <person name="Thomson N.R."/>
            <person name="Harris D.E."/>
            <person name="Holden M.T.G."/>
            <person name="Churcher C.M."/>
            <person name="Bentley S.D."/>
            <person name="Mungall K.L."/>
            <person name="Cerdeno-Tarraga A.-M."/>
            <person name="Temple L."/>
            <person name="James K.D."/>
            <person name="Harris B."/>
            <person name="Quail M.A."/>
            <person name="Achtman M."/>
            <person name="Atkin R."/>
            <person name="Baker S."/>
            <person name="Basham D."/>
            <person name="Bason N."/>
            <person name="Cherevach I."/>
            <person name="Chillingworth T."/>
            <person name="Collins M."/>
            <person name="Cronin A."/>
            <person name="Davis P."/>
            <person name="Doggett J."/>
            <person name="Feltwell T."/>
            <person name="Goble A."/>
            <person name="Hamlin N."/>
            <person name="Hauser H."/>
            <person name="Holroyd S."/>
            <person name="Jagels K."/>
            <person name="Leather S."/>
            <person name="Moule S."/>
            <person name="Norberczak H."/>
            <person name="O'Neil S."/>
            <person name="Ormond D."/>
            <person name="Price C."/>
            <person name="Rabbinowitsch E."/>
            <person name="Rutter S."/>
            <person name="Sanders M."/>
            <person name="Saunders D."/>
            <person name="Seeger K."/>
            <person name="Sharp S."/>
            <person name="Simmonds M."/>
            <person name="Skelton J."/>
            <person name="Squares R."/>
            <person name="Squares S."/>
            <person name="Stevens K."/>
            <person name="Unwin L."/>
            <person name="Whitehead S."/>
            <person name="Barrell B.G."/>
            <person name="Maskell D.J."/>
        </authorList>
    </citation>
    <scope>NUCLEOTIDE SEQUENCE [LARGE SCALE GENOMIC DNA]</scope>
    <source>
        <strain>ATCC BAA-588 / NCTC 13252 / RB50</strain>
    </source>
</reference>
<reference key="2">
    <citation type="journal article" date="1987" name="J. Bacteriol.">
        <title>Bordetella parapertussis and Bordetella bronchiseptica contain transcriptionally silent pertussis toxin genes.</title>
        <authorList>
            <person name="Arico B."/>
            <person name="Rappuoli R."/>
        </authorList>
    </citation>
    <scope>TRANSCRIPTIONAL SILENCING</scope>
    <source>
        <strain>ATCC 4617 / NCIB 9935 / NCTC 8344 / NRRL B-140</strain>
    </source>
</reference>
<reference key="3">
    <citation type="journal article" date="1996" name="Infect. Immun.">
        <title>Analysis of proteins encoded by the ptx and ptl genes of Bordetella bronchiseptica and Bordetella parapertussis.</title>
        <authorList>
            <person name="Hausman S.Z."/>
            <person name="Cherry J.D."/>
            <person name="Heininger U."/>
            <person name="Wirsing von Koenig C.H."/>
            <person name="Burns D.L."/>
        </authorList>
    </citation>
    <scope>POSSIBLE EXPRESSION OF PTL AND PTX PROTEINS UNDER CONDITIONS DIFFERENT FROM B.PERTUSSIS EXPRESSION CONDITIONS</scope>
    <source>
        <strain>ATCC 31437 / Bb55</strain>
    </source>
</reference>
<sequence>MIHAHSNARLLRWAILAIAPATLGACAPNGPPGLPYPDGKPLIPINTAAPEQGSSCQTRAP</sequence>
<comment type="caution">
    <text evidence="3">B.parapertussis and B.bronchiseptica seem not to produce the pertussis toxin (S1, S2, S4, S5 and S3) and ptl proteins (PtlA, PtlB, PtlC, PtlD, PtlE, PtlF, PtlG, PtlH and PtlI) in vivo due to changes in the promoter region of the ptx-ptl operon. However, it is possible that their promoter is active under certain, as-yet-undefined conditions and that B.parapertussis and B.bronchiseptica are therefore capable of producing these proteins.</text>
</comment>
<feature type="signal peptide" evidence="1">
    <location>
        <begin position="1"/>
        <end position="25"/>
    </location>
</feature>
<feature type="chain" id="PRO_0000287405" description="Type IV secretion system protein PtlI homolog">
    <location>
        <begin position="26"/>
        <end position="61"/>
    </location>
</feature>
<feature type="region of interest" description="Disordered" evidence="2">
    <location>
        <begin position="29"/>
        <end position="61"/>
    </location>
</feature>
<feature type="compositionally biased region" description="Polar residues" evidence="2">
    <location>
        <begin position="52"/>
        <end position="61"/>
    </location>
</feature>
<name>PTLI_BORBR</name>
<organism>
    <name type="scientific">Bordetella bronchiseptica (strain ATCC BAA-588 / NCTC 13252 / RB50)</name>
    <name type="common">Alcaligenes bronchisepticus</name>
    <dbReference type="NCBI Taxonomy" id="257310"/>
    <lineage>
        <taxon>Bacteria</taxon>
        <taxon>Pseudomonadati</taxon>
        <taxon>Pseudomonadota</taxon>
        <taxon>Betaproteobacteria</taxon>
        <taxon>Burkholderiales</taxon>
        <taxon>Alcaligenaceae</taxon>
        <taxon>Bordetella</taxon>
    </lineage>
</organism>
<gene>
    <name type="primary">ptlI</name>
    <name type="ordered locus">BB4898.1</name>
    <name type="ORF">BB4898A</name>
</gene>